<protein>
    <recommendedName>
        <fullName>Roundabout homolog 2</fullName>
    </recommendedName>
</protein>
<accession>Q9HCK4</accession>
<accession>O43608</accession>
<accession>Q19AB4</accession>
<accession>Q19AB5</accession>
<gene>
    <name type="primary">ROBO2</name>
    <name type="synonym">KIAA1568</name>
</gene>
<proteinExistence type="evidence at protein level"/>
<sequence>MSLLMFTQLLLCGFLYVRVDGSRLRQEDFPPRIVEHPSDVIVSKGEPTTLNCKAEGRPTPTIEWYKDGERVETDKDDPRSHRMLLPSGSLFFLRIVHGRRSKPDEGSYVCVARNYLGEAVSRNASLEVALLRDDFRQNPTDVVVAAGEPAILECQPPRGHPEPTIYWKKDKVRIDDKEERISIRGGKLMISNTRKSDAGMYTCVGTNMVGERDSDPAELTVFERPTFLRRPINQVVLEEEAVEFRCQVQGDPQPTVRWKKDDADLPRGRYDIKDDYTLRIKKTMSTDEGTYMCIAENRVGKMEASATLTVRAPPQFVVRPRDQIVAQGRTVTFPCETKGNPQPAVFWQKEGSQNLLFPNQPQQPNSRCSVSPTGDLTITNIQRSDAGYYICQALTVAGSILAKAQLEVTDVLTDRPPPIILQGPANQTLAVDGTALLKCKATGDPLPVISWLKEGFTFPGRDPRATIQEQGTLQIKNLRISDTGTYTCVATSSSGETSWSAVLDVTESGATISKNYDLSDLPGPPSKPQVTDVTKNSVTLSWQPGTPGTLPASAYIIEAFSQSVSNSWQTVANHVKTTLYTVRGLRPNTIYLFMVRAINPQGLSDPSPMSDPVRTQDISPPAQGVDHRQVQKELGDVLVRLHNPVVLTPTTVQVTWTVDRQPQFIQGYRVMYRQTSGLQATSSWQNLDAKVPTERSAVLVNLKKGVTYEIKVRPYFNEFQGMDSESKTVRTTEEAPSAPPQSVTVLTVGSYNSTSISVSWDPPPPDHQNGIIQEYKIWCLGNETRFHINKTVDAAIRSVIIGGLFPGIQYRVEVAASTSAGVGVKSEPQPIIIGRRNEVVITENNNSITEQITDVVKQPAFIAGIGGACWVILMGFSIWLYWRRKKRKGLSNYAVTFQRGDGGLMSNGSRPGLLNAGDPSYPWLADSWPATSLPVNNSNSGPNEIGNFGRGDVLPPVPGQGDKTATMLSDGAIYSSIDFTTKTSYNSSSQITQATPYATTQILHSNSIHELAVDLPDPQWKSSIQQKTDLMGFGYSLPDQNKGNNGGKGGKKKKNKNSSKPQKNNGSTWANVPLPPPPVQPLPGTELEHYAVEQQENGYDSDSWCPPLPVQTYLHQGLEDELEEDDDRVPTPPVRGVASSPAISFGQQSTATLTPSPREEMQPMLQAHLDELTRAYQFDIAKQTWHIQSNNQPPQPPVPPLGYVSGALISDLETDVADDDADDEEEALEIPRPLRALDQTPGSSMDNLDSSVTGKAFTSSQRPRPTSPFSTDSNTSAALSQSQRPRPTKKHKGGRMDQQPALPHRREGMTDEEALVPYSKPSFPSPGGHSSSGTASSKGSTGPRKTEVLRAGHQRNASDLLDIGYMGSNSQGQFTGEL</sequence>
<dbReference type="EMBL" id="DQ533874">
    <property type="protein sequence ID" value="ABF83431.1"/>
    <property type="molecule type" value="mRNA"/>
</dbReference>
<dbReference type="EMBL" id="AB046788">
    <property type="protein sequence ID" value="BAB13394.1"/>
    <property type="status" value="ALT_INIT"/>
    <property type="molecule type" value="mRNA"/>
</dbReference>
<dbReference type="EMBL" id="DQ533873">
    <property type="protein sequence ID" value="ABF83430.1"/>
    <property type="molecule type" value="mRNA"/>
</dbReference>
<dbReference type="EMBL" id="AC016942">
    <property type="status" value="NOT_ANNOTATED_CDS"/>
    <property type="molecule type" value="Genomic_DNA"/>
</dbReference>
<dbReference type="EMBL" id="AC016952">
    <property type="status" value="NOT_ANNOTATED_CDS"/>
    <property type="molecule type" value="Genomic_DNA"/>
</dbReference>
<dbReference type="EMBL" id="AC024256">
    <property type="status" value="NOT_ANNOTATED_CDS"/>
    <property type="molecule type" value="Genomic_DNA"/>
</dbReference>
<dbReference type="EMBL" id="AC026877">
    <property type="status" value="NOT_ANNOTATED_CDS"/>
    <property type="molecule type" value="Genomic_DNA"/>
</dbReference>
<dbReference type="EMBL" id="AC067717">
    <property type="status" value="NOT_ANNOTATED_CDS"/>
    <property type="molecule type" value="Genomic_DNA"/>
</dbReference>
<dbReference type="EMBL" id="AC117514">
    <property type="status" value="NOT_ANNOTATED_CDS"/>
    <property type="molecule type" value="Genomic_DNA"/>
</dbReference>
<dbReference type="EMBL" id="AC117515">
    <property type="status" value="NOT_ANNOTATED_CDS"/>
    <property type="molecule type" value="Genomic_DNA"/>
</dbReference>
<dbReference type="EMBL" id="AC117516">
    <property type="status" value="NOT_ANNOTATED_CDS"/>
    <property type="molecule type" value="Genomic_DNA"/>
</dbReference>
<dbReference type="EMBL" id="AC126467">
    <property type="status" value="NOT_ANNOTATED_CDS"/>
    <property type="molecule type" value="Genomic_DNA"/>
</dbReference>
<dbReference type="EMBL" id="AC130004">
    <property type="status" value="NOT_ANNOTATED_CDS"/>
    <property type="molecule type" value="Genomic_DNA"/>
</dbReference>
<dbReference type="EMBL" id="AC131005">
    <property type="status" value="NOT_ANNOTATED_CDS"/>
    <property type="molecule type" value="Genomic_DNA"/>
</dbReference>
<dbReference type="EMBL" id="AC131154">
    <property type="status" value="NOT_ANNOTATED_CDS"/>
    <property type="molecule type" value="Genomic_DNA"/>
</dbReference>
<dbReference type="EMBL" id="AC133040">
    <property type="status" value="NOT_ANNOTATED_CDS"/>
    <property type="molecule type" value="Genomic_DNA"/>
</dbReference>
<dbReference type="EMBL" id="AC138974">
    <property type="status" value="NOT_ANNOTATED_CDS"/>
    <property type="molecule type" value="Genomic_DNA"/>
</dbReference>
<dbReference type="EMBL" id="BC064374">
    <property type="protein sequence ID" value="AAH64374.1"/>
    <property type="molecule type" value="mRNA"/>
</dbReference>
<dbReference type="EMBL" id="BC146772">
    <property type="protein sequence ID" value="AAI46773.1"/>
    <property type="molecule type" value="mRNA"/>
</dbReference>
<dbReference type="EMBL" id="AF040991">
    <property type="protein sequence ID" value="AAC39576.1"/>
    <property type="status" value="ALT_FRAME"/>
    <property type="molecule type" value="mRNA"/>
</dbReference>
<dbReference type="CCDS" id="CCDS43109.1">
    <molecule id="Q9HCK4-1"/>
</dbReference>
<dbReference type="CCDS" id="CCDS54609.1">
    <molecule id="Q9HCK4-3"/>
</dbReference>
<dbReference type="RefSeq" id="NP_001122401.1">
    <molecule id="Q9HCK4-3"/>
    <property type="nucleotide sequence ID" value="NM_001128929.3"/>
</dbReference>
<dbReference type="RefSeq" id="NP_001276968.1">
    <property type="nucleotide sequence ID" value="NM_001290039.1"/>
</dbReference>
<dbReference type="RefSeq" id="NP_001276969.1">
    <property type="nucleotide sequence ID" value="NM_001290040.1"/>
</dbReference>
<dbReference type="RefSeq" id="NP_001276994.1">
    <property type="nucleotide sequence ID" value="NM_001290065.1"/>
</dbReference>
<dbReference type="RefSeq" id="NP_002933.1">
    <molecule id="Q9HCK4-1"/>
    <property type="nucleotide sequence ID" value="NM_002942.5"/>
</dbReference>
<dbReference type="PDB" id="1UEM">
    <property type="method" value="NMR"/>
    <property type="chains" value="A=514-617"/>
</dbReference>
<dbReference type="PDB" id="1UJT">
    <property type="method" value="NMR"/>
    <property type="chains" value="A=628-734"/>
</dbReference>
<dbReference type="PDB" id="2EDJ">
    <property type="method" value="NMR"/>
    <property type="chains" value="A=417-509"/>
</dbReference>
<dbReference type="PDB" id="5NOI">
    <property type="method" value="X-ray"/>
    <property type="resolution" value="2.40 A"/>
    <property type="chains" value="A=311-509"/>
</dbReference>
<dbReference type="PDB" id="6I9S">
    <property type="method" value="X-ray"/>
    <property type="resolution" value="2.48 A"/>
    <property type="chains" value="A/B=126-312"/>
</dbReference>
<dbReference type="PDB" id="6IAA">
    <property type="method" value="X-ray"/>
    <property type="resolution" value="3.60 A"/>
    <property type="chains" value="A/B/C=22-859"/>
</dbReference>
<dbReference type="PDBsum" id="1UEM"/>
<dbReference type="PDBsum" id="1UJT"/>
<dbReference type="PDBsum" id="2EDJ"/>
<dbReference type="PDBsum" id="5NOI"/>
<dbReference type="PDBsum" id="6I9S"/>
<dbReference type="PDBsum" id="6IAA"/>
<dbReference type="SMR" id="Q9HCK4"/>
<dbReference type="BioGRID" id="112019">
    <property type="interactions" value="40"/>
</dbReference>
<dbReference type="FunCoup" id="Q9HCK4">
    <property type="interactions" value="550"/>
</dbReference>
<dbReference type="IntAct" id="Q9HCK4">
    <property type="interactions" value="33"/>
</dbReference>
<dbReference type="MINT" id="Q9HCK4"/>
<dbReference type="STRING" id="9606.ENSP00000417335"/>
<dbReference type="GlyCosmos" id="Q9HCK4">
    <property type="glycosylation" value="6 sites, No reported glycans"/>
</dbReference>
<dbReference type="GlyGen" id="Q9HCK4">
    <property type="glycosylation" value="8 sites, 3 N-linked glycans (3 sites)"/>
</dbReference>
<dbReference type="iPTMnet" id="Q9HCK4"/>
<dbReference type="PhosphoSitePlus" id="Q9HCK4"/>
<dbReference type="BioMuta" id="ROBO2"/>
<dbReference type="DMDM" id="49036496"/>
<dbReference type="jPOST" id="Q9HCK4"/>
<dbReference type="MassIVE" id="Q9HCK4"/>
<dbReference type="PaxDb" id="9606-ENSP00000417335"/>
<dbReference type="PeptideAtlas" id="Q9HCK4"/>
<dbReference type="ProteomicsDB" id="81744">
    <molecule id="Q9HCK4-1"/>
</dbReference>
<dbReference type="ProteomicsDB" id="81745">
    <molecule id="Q9HCK4-2"/>
</dbReference>
<dbReference type="ProteomicsDB" id="81746">
    <molecule id="Q9HCK4-3"/>
</dbReference>
<dbReference type="Antibodypedia" id="2693">
    <property type="antibodies" value="250 antibodies from 34 providers"/>
</dbReference>
<dbReference type="DNASU" id="6092"/>
<dbReference type="Ensembl" id="ENST00000461745.5">
    <molecule id="Q9HCK4-1"/>
    <property type="protein sequence ID" value="ENSP00000417164.1"/>
    <property type="gene ID" value="ENSG00000185008.19"/>
</dbReference>
<dbReference type="Ensembl" id="ENST00000487694.7">
    <molecule id="Q9HCK4-3"/>
    <property type="protein sequence ID" value="ENSP00000417335.2"/>
    <property type="gene ID" value="ENSG00000185008.19"/>
</dbReference>
<dbReference type="GeneID" id="6092"/>
<dbReference type="KEGG" id="hsa:6092"/>
<dbReference type="UCSC" id="uc003dpy.5">
    <molecule id="Q9HCK4-1"/>
    <property type="organism name" value="human"/>
</dbReference>
<dbReference type="AGR" id="HGNC:10250"/>
<dbReference type="CTD" id="6092"/>
<dbReference type="DisGeNET" id="6092"/>
<dbReference type="GeneCards" id="ROBO2"/>
<dbReference type="HGNC" id="HGNC:10250">
    <property type="gene designation" value="ROBO2"/>
</dbReference>
<dbReference type="HPA" id="ENSG00000185008">
    <property type="expression patterns" value="Tissue enhanced (brain, ovary)"/>
</dbReference>
<dbReference type="MalaCards" id="ROBO2"/>
<dbReference type="MIM" id="602431">
    <property type="type" value="gene"/>
</dbReference>
<dbReference type="MIM" id="610878">
    <property type="type" value="phenotype"/>
</dbReference>
<dbReference type="neXtProt" id="NX_Q9HCK4"/>
<dbReference type="OpenTargets" id="ENSG00000185008"/>
<dbReference type="Orphanet" id="289365">
    <property type="disease" value="Familial vesicoureteral reflux"/>
</dbReference>
<dbReference type="PharmGKB" id="PA34621"/>
<dbReference type="VEuPathDB" id="HostDB:ENSG00000185008"/>
<dbReference type="eggNOG" id="KOG4222">
    <property type="taxonomic scope" value="Eukaryota"/>
</dbReference>
<dbReference type="GeneTree" id="ENSGT00940000156324"/>
<dbReference type="InParanoid" id="Q9HCK4"/>
<dbReference type="OMA" id="IVMKNHD"/>
<dbReference type="OrthoDB" id="428111at2759"/>
<dbReference type="PAN-GO" id="Q9HCK4">
    <property type="GO annotations" value="6 GO annotations based on evolutionary models"/>
</dbReference>
<dbReference type="PhylomeDB" id="Q9HCK4"/>
<dbReference type="TreeFam" id="TF351053"/>
<dbReference type="PathwayCommons" id="Q9HCK4"/>
<dbReference type="Reactome" id="R-HSA-376176">
    <property type="pathway name" value="Signaling by ROBO receptors"/>
</dbReference>
<dbReference type="Reactome" id="R-HSA-428542">
    <property type="pathway name" value="Regulation of commissural axon pathfinding by SLIT and ROBO"/>
</dbReference>
<dbReference type="Reactome" id="R-HSA-8985801">
    <property type="pathway name" value="Regulation of cortical dendrite branching"/>
</dbReference>
<dbReference type="Reactome" id="R-HSA-9010553">
    <property type="pathway name" value="Regulation of expression of SLITs and ROBOs"/>
</dbReference>
<dbReference type="Reactome" id="R-HSA-9010642">
    <property type="pathway name" value="ROBO receptors bind AKAP5"/>
</dbReference>
<dbReference type="Reactome" id="R-HSA-9830674">
    <property type="pathway name" value="Formation of the ureteric bud"/>
</dbReference>
<dbReference type="SignaLink" id="Q9HCK4"/>
<dbReference type="SIGNOR" id="Q9HCK4"/>
<dbReference type="BioGRID-ORCS" id="6092">
    <property type="hits" value="10 hits in 1135 CRISPR screens"/>
</dbReference>
<dbReference type="ChiTaRS" id="ROBO2">
    <property type="organism name" value="human"/>
</dbReference>
<dbReference type="EvolutionaryTrace" id="Q9HCK4"/>
<dbReference type="GeneWiki" id="ROBO2"/>
<dbReference type="GenomeRNAi" id="6092"/>
<dbReference type="Pharos" id="Q9HCK4">
    <property type="development level" value="Tbio"/>
</dbReference>
<dbReference type="PRO" id="PR:Q9HCK4"/>
<dbReference type="Proteomes" id="UP000005640">
    <property type="component" value="Chromosome 3"/>
</dbReference>
<dbReference type="RNAct" id="Q9HCK4">
    <property type="molecule type" value="protein"/>
</dbReference>
<dbReference type="Bgee" id="ENSG00000185008">
    <property type="expression patterns" value="Expressed in ganglionic eminence and 145 other cell types or tissues"/>
</dbReference>
<dbReference type="ExpressionAtlas" id="Q9HCK4">
    <property type="expression patterns" value="baseline and differential"/>
</dbReference>
<dbReference type="GO" id="GO:0030673">
    <property type="term" value="C:axolemma"/>
    <property type="evidence" value="ECO:0000250"/>
    <property type="project" value="UniProtKB"/>
</dbReference>
<dbReference type="GO" id="GO:0009986">
    <property type="term" value="C:cell surface"/>
    <property type="evidence" value="ECO:0000314"/>
    <property type="project" value="UniProtKB"/>
</dbReference>
<dbReference type="GO" id="GO:0070062">
    <property type="term" value="C:extracellular exosome"/>
    <property type="evidence" value="ECO:0007005"/>
    <property type="project" value="UniProtKB"/>
</dbReference>
<dbReference type="GO" id="GO:0005886">
    <property type="term" value="C:plasma membrane"/>
    <property type="evidence" value="ECO:0000304"/>
    <property type="project" value="Reactome"/>
</dbReference>
<dbReference type="GO" id="GO:0008046">
    <property type="term" value="F:axon guidance receptor activity"/>
    <property type="evidence" value="ECO:0000250"/>
    <property type="project" value="UniProtKB"/>
</dbReference>
<dbReference type="GO" id="GO:0042802">
    <property type="term" value="F:identical protein binding"/>
    <property type="evidence" value="ECO:0000314"/>
    <property type="project" value="UniProtKB"/>
</dbReference>
<dbReference type="GO" id="GO:0035904">
    <property type="term" value="P:aorta development"/>
    <property type="evidence" value="ECO:0000250"/>
    <property type="project" value="BHF-UCL"/>
</dbReference>
<dbReference type="GO" id="GO:0003180">
    <property type="term" value="P:aortic valve morphogenesis"/>
    <property type="evidence" value="ECO:0000250"/>
    <property type="project" value="BHF-UCL"/>
</dbReference>
<dbReference type="GO" id="GO:0061364">
    <property type="term" value="P:apoptotic process involved in luteolysis"/>
    <property type="evidence" value="ECO:0000270"/>
    <property type="project" value="UniProtKB"/>
</dbReference>
<dbReference type="GO" id="GO:0007411">
    <property type="term" value="P:axon guidance"/>
    <property type="evidence" value="ECO:0000250"/>
    <property type="project" value="UniProtKB"/>
</dbReference>
<dbReference type="GO" id="GO:0016199">
    <property type="term" value="P:axon midline choice point recognition"/>
    <property type="evidence" value="ECO:0000250"/>
    <property type="project" value="UniProtKB"/>
</dbReference>
<dbReference type="GO" id="GO:0007420">
    <property type="term" value="P:brain development"/>
    <property type="evidence" value="ECO:0000270"/>
    <property type="project" value="UniProtKB"/>
</dbReference>
<dbReference type="GO" id="GO:0098609">
    <property type="term" value="P:cell-cell adhesion"/>
    <property type="evidence" value="ECO:0000318"/>
    <property type="project" value="GO_Central"/>
</dbReference>
<dbReference type="GO" id="GO:0032870">
    <property type="term" value="P:cellular response to hormone stimulus"/>
    <property type="evidence" value="ECO:0000270"/>
    <property type="project" value="UniProtKB"/>
</dbReference>
<dbReference type="GO" id="GO:0007417">
    <property type="term" value="P:central nervous system development"/>
    <property type="evidence" value="ECO:0000303"/>
    <property type="project" value="UniProtKB"/>
</dbReference>
<dbReference type="GO" id="GO:0006935">
    <property type="term" value="P:chemotaxis"/>
    <property type="evidence" value="ECO:0007669"/>
    <property type="project" value="UniProtKB-KW"/>
</dbReference>
<dbReference type="GO" id="GO:0003272">
    <property type="term" value="P:endocardial cushion formation"/>
    <property type="evidence" value="ECO:0000250"/>
    <property type="project" value="BHF-UCL"/>
</dbReference>
<dbReference type="GO" id="GO:0003129">
    <property type="term" value="P:heart induction"/>
    <property type="evidence" value="ECO:0000250"/>
    <property type="project" value="BHF-UCL"/>
</dbReference>
<dbReference type="GO" id="GO:0007156">
    <property type="term" value="P:homophilic cell adhesion via plasma membrane adhesion molecules"/>
    <property type="evidence" value="ECO:0000314"/>
    <property type="project" value="UniProtKB"/>
</dbReference>
<dbReference type="GO" id="GO:0001656">
    <property type="term" value="P:metanephros development"/>
    <property type="evidence" value="ECO:0000250"/>
    <property type="project" value="UniProtKB"/>
</dbReference>
<dbReference type="GO" id="GO:0050925">
    <property type="term" value="P:negative regulation of negative chemotaxis"/>
    <property type="evidence" value="ECO:0000314"/>
    <property type="project" value="UniProtKB"/>
</dbReference>
<dbReference type="GO" id="GO:0051964">
    <property type="term" value="P:negative regulation of synapse assembly"/>
    <property type="evidence" value="ECO:0000250"/>
    <property type="project" value="UniProtKB"/>
</dbReference>
<dbReference type="GO" id="GO:0021891">
    <property type="term" value="P:olfactory bulb interneuron development"/>
    <property type="evidence" value="ECO:0000250"/>
    <property type="project" value="UniProtKB"/>
</dbReference>
<dbReference type="GO" id="GO:0003148">
    <property type="term" value="P:outflow tract septum morphogenesis"/>
    <property type="evidence" value="ECO:0000250"/>
    <property type="project" value="BHF-UCL"/>
</dbReference>
<dbReference type="GO" id="GO:0050772">
    <property type="term" value="P:positive regulation of axonogenesis"/>
    <property type="evidence" value="ECO:0000314"/>
    <property type="project" value="UniProtKB"/>
</dbReference>
<dbReference type="GO" id="GO:0045747">
    <property type="term" value="P:positive regulation of Notch signaling pathway"/>
    <property type="evidence" value="ECO:0000250"/>
    <property type="project" value="BHF-UCL"/>
</dbReference>
<dbReference type="GO" id="GO:0003184">
    <property type="term" value="P:pulmonary valve morphogenesis"/>
    <property type="evidence" value="ECO:0000250"/>
    <property type="project" value="BHF-UCL"/>
</dbReference>
<dbReference type="GO" id="GO:0031290">
    <property type="term" value="P:retinal ganglion cell axon guidance"/>
    <property type="evidence" value="ECO:0000250"/>
    <property type="project" value="UniProtKB"/>
</dbReference>
<dbReference type="GO" id="GO:0001657">
    <property type="term" value="P:ureteric bud development"/>
    <property type="evidence" value="ECO:0000315"/>
    <property type="project" value="UniProtKB"/>
</dbReference>
<dbReference type="GO" id="GO:0060412">
    <property type="term" value="P:ventricular septum morphogenesis"/>
    <property type="evidence" value="ECO:0000250"/>
    <property type="project" value="BHF-UCL"/>
</dbReference>
<dbReference type="CDD" id="cd00063">
    <property type="entry name" value="FN3"/>
    <property type="match status" value="3"/>
</dbReference>
<dbReference type="CDD" id="cd07693">
    <property type="entry name" value="IgC_1_Robo"/>
    <property type="match status" value="1"/>
</dbReference>
<dbReference type="CDD" id="cd05726">
    <property type="entry name" value="IgI_4_Robo"/>
    <property type="match status" value="1"/>
</dbReference>
<dbReference type="CDD" id="cd20952">
    <property type="entry name" value="IgI_5_Robo"/>
    <property type="match status" value="1"/>
</dbReference>
<dbReference type="FunFam" id="2.60.40.10:FF:000053">
    <property type="entry name" value="Roundabout guidance receptor 1"/>
    <property type="match status" value="1"/>
</dbReference>
<dbReference type="FunFam" id="2.60.40.10:FF:000055">
    <property type="entry name" value="roundabout homolog 1 isoform X2"/>
    <property type="match status" value="1"/>
</dbReference>
<dbReference type="FunFam" id="2.60.40.10:FF:000065">
    <property type="entry name" value="roundabout homolog 1 isoform X3"/>
    <property type="match status" value="1"/>
</dbReference>
<dbReference type="FunFam" id="2.60.40.10:FF:000026">
    <property type="entry name" value="roundabout homolog 2 isoform X1"/>
    <property type="match status" value="1"/>
</dbReference>
<dbReference type="FunFam" id="2.60.40.10:FF:000008">
    <property type="entry name" value="roundabout homolog 2 isoform X2"/>
    <property type="match status" value="2"/>
</dbReference>
<dbReference type="FunFam" id="2.60.40.10:FF:000043">
    <property type="entry name" value="roundabout homolog 2 isoform X2"/>
    <property type="match status" value="1"/>
</dbReference>
<dbReference type="FunFam" id="2.60.40.10:FF:000058">
    <property type="entry name" value="roundabout homolog 2 isoform X3"/>
    <property type="match status" value="1"/>
</dbReference>
<dbReference type="Gene3D" id="2.60.40.10">
    <property type="entry name" value="Immunoglobulins"/>
    <property type="match status" value="8"/>
</dbReference>
<dbReference type="InterPro" id="IPR003961">
    <property type="entry name" value="FN3_dom"/>
</dbReference>
<dbReference type="InterPro" id="IPR036116">
    <property type="entry name" value="FN3_sf"/>
</dbReference>
<dbReference type="InterPro" id="IPR007110">
    <property type="entry name" value="Ig-like_dom"/>
</dbReference>
<dbReference type="InterPro" id="IPR036179">
    <property type="entry name" value="Ig-like_dom_sf"/>
</dbReference>
<dbReference type="InterPro" id="IPR013783">
    <property type="entry name" value="Ig-like_fold"/>
</dbReference>
<dbReference type="InterPro" id="IPR013098">
    <property type="entry name" value="Ig_I-set"/>
</dbReference>
<dbReference type="InterPro" id="IPR003599">
    <property type="entry name" value="Ig_sub"/>
</dbReference>
<dbReference type="InterPro" id="IPR003598">
    <property type="entry name" value="Ig_sub2"/>
</dbReference>
<dbReference type="InterPro" id="IPR013106">
    <property type="entry name" value="Ig_V-set"/>
</dbReference>
<dbReference type="InterPro" id="IPR051170">
    <property type="entry name" value="Neural/epithelial_adhesion"/>
</dbReference>
<dbReference type="PANTHER" id="PTHR12231">
    <property type="entry name" value="CTX-RELATED TYPE I TRANSMEMBRANE PROTEIN"/>
    <property type="match status" value="1"/>
</dbReference>
<dbReference type="PANTHER" id="PTHR12231:SF253">
    <property type="entry name" value="DPR-INTERACTING PROTEIN ETA, ISOFORM B-RELATED"/>
    <property type="match status" value="1"/>
</dbReference>
<dbReference type="Pfam" id="PF00041">
    <property type="entry name" value="fn3"/>
    <property type="match status" value="3"/>
</dbReference>
<dbReference type="Pfam" id="PF07679">
    <property type="entry name" value="I-set"/>
    <property type="match status" value="2"/>
</dbReference>
<dbReference type="Pfam" id="PF13927">
    <property type="entry name" value="Ig_3"/>
    <property type="match status" value="3"/>
</dbReference>
<dbReference type="SMART" id="SM00060">
    <property type="entry name" value="FN3"/>
    <property type="match status" value="3"/>
</dbReference>
<dbReference type="SMART" id="SM00409">
    <property type="entry name" value="IG"/>
    <property type="match status" value="5"/>
</dbReference>
<dbReference type="SMART" id="SM00408">
    <property type="entry name" value="IGc2"/>
    <property type="match status" value="5"/>
</dbReference>
<dbReference type="SMART" id="SM00406">
    <property type="entry name" value="IGv"/>
    <property type="match status" value="3"/>
</dbReference>
<dbReference type="SUPFAM" id="SSF49265">
    <property type="entry name" value="Fibronectin type III"/>
    <property type="match status" value="2"/>
</dbReference>
<dbReference type="SUPFAM" id="SSF48726">
    <property type="entry name" value="Immunoglobulin"/>
    <property type="match status" value="5"/>
</dbReference>
<dbReference type="PROSITE" id="PS50853">
    <property type="entry name" value="FN3"/>
    <property type="match status" value="3"/>
</dbReference>
<dbReference type="PROSITE" id="PS50835">
    <property type="entry name" value="IG_LIKE"/>
    <property type="match status" value="5"/>
</dbReference>
<comment type="function">
    <text>Receptor for SLIT2, and probably SLIT1, which are thought to act as molecular guidance cue in cellular migration, including axonal navigation at the ventral midline of the neural tube and projection of axons to different regions during neuronal development.</text>
</comment>
<comment type="subunit">
    <text evidence="6 7">Interacts with SLIT2.</text>
</comment>
<comment type="interaction">
    <interactant intactId="EBI-399800">
        <id>Q9HCK4</id>
    </interactant>
    <interactant intactId="EBI-13345167">
        <id>Q8TDT2</id>
        <label>GPR152</label>
    </interactant>
    <organismsDiffer>false</organismsDiffer>
    <experiments>3</experiments>
</comment>
<comment type="interaction">
    <interactant intactId="EBI-399800">
        <id>Q9HCK4</id>
    </interactant>
    <interactant intactId="EBI-10982110">
        <id>Q96Q45-2</id>
        <label>TMEM237</label>
    </interactant>
    <organismsDiffer>false</organismsDiffer>
    <experiments>5</experiments>
</comment>
<comment type="subcellular location">
    <subcellularLocation>
        <location evidence="11">Membrane</location>
        <topology evidence="11">Single-pass type I membrane protein</topology>
    </subcellularLocation>
</comment>
<comment type="alternative products">
    <event type="alternative splicing"/>
    <isoform>
        <id>Q9HCK4-1</id>
        <name>1</name>
        <sequence type="displayed"/>
    </isoform>
    <isoform>
        <id>Q9HCK4-2</id>
        <name>2</name>
        <sequence type="described" ref="VSP_010647"/>
    </isoform>
    <isoform>
        <id>Q9HCK4-3</id>
        <name>3</name>
        <sequence type="described" ref="VSP_043394"/>
    </isoform>
</comment>
<comment type="disease" evidence="8">
    <disease id="DI-02412">
        <name>Vesicoureteral reflux 2</name>
        <acronym>VUR2</acronym>
        <description>A disease belonging to the group of congenital anomalies of the kidney and urinary tract. It is characterized by the reflux of urine from the bladder into the ureters and sometimes into the kidneys, and is a risk factor for urinary tract infections. Primary disease results from a developmental defect of the ureterovesical junction. In combination with intrarenal reflux, the resulting inflammatory reaction may result in renal injury or scarring, also called reflux nephropathy. Extensive renal scarring impairs renal function and may predispose patients to hypertension, proteinuria, renal insufficiency and end-stage renal disease.</description>
        <dbReference type="MIM" id="610878"/>
    </disease>
    <text>The disease is caused by variants affecting the gene represented in this entry.</text>
</comment>
<comment type="disease">
    <text>A chromosomal aberration involving ROBO2 is a cause of multiple congenital abnormalities, including severe bilateral VUR with ureterovesical junction defects. Translocation t(Y;3)(p11;p12) with PCDH11Y. This translocation disrupts ROBO2 and produces dominant-negative ROBO2 proteins that abrogate SLIT-ROBO signaling in vitro.</text>
</comment>
<comment type="similarity">
    <text evidence="11">Belongs to the immunoglobulin superfamily. ROBO family.</text>
</comment>
<comment type="sequence caution" evidence="11">
    <conflict type="frameshift">
        <sequence resource="EMBL-CDS" id="AAC39576"/>
    </conflict>
</comment>
<comment type="sequence caution" evidence="11">
    <conflict type="erroneous initiation">
        <sequence resource="EMBL-CDS" id="BAB13394"/>
    </conflict>
</comment>
<organism>
    <name type="scientific">Homo sapiens</name>
    <name type="common">Human</name>
    <dbReference type="NCBI Taxonomy" id="9606"/>
    <lineage>
        <taxon>Eukaryota</taxon>
        <taxon>Metazoa</taxon>
        <taxon>Chordata</taxon>
        <taxon>Craniata</taxon>
        <taxon>Vertebrata</taxon>
        <taxon>Euteleostomi</taxon>
        <taxon>Mammalia</taxon>
        <taxon>Eutheria</taxon>
        <taxon>Euarchontoglires</taxon>
        <taxon>Primates</taxon>
        <taxon>Haplorrhini</taxon>
        <taxon>Catarrhini</taxon>
        <taxon>Hominidae</taxon>
        <taxon>Homo</taxon>
    </lineage>
</organism>
<feature type="signal peptide" evidence="2">
    <location>
        <begin position="1"/>
        <end position="21"/>
    </location>
</feature>
<feature type="chain" id="PRO_0000031036" description="Roundabout homolog 2">
    <location>
        <begin position="22"/>
        <end position="1378"/>
    </location>
</feature>
<feature type="topological domain" description="Extracellular" evidence="2">
    <location>
        <begin position="22"/>
        <end position="859"/>
    </location>
</feature>
<feature type="transmembrane region" description="Helical" evidence="2">
    <location>
        <begin position="860"/>
        <end position="880"/>
    </location>
</feature>
<feature type="topological domain" description="Cytoplasmic" evidence="2">
    <location>
        <begin position="881"/>
        <end position="1378"/>
    </location>
</feature>
<feature type="domain" description="Ig-like C2-type 1">
    <location>
        <begin position="31"/>
        <end position="127"/>
    </location>
</feature>
<feature type="domain" description="Ig-like C2-type 2">
    <location>
        <begin position="133"/>
        <end position="220"/>
    </location>
</feature>
<feature type="domain" description="Ig-like C2-type 3">
    <location>
        <begin position="225"/>
        <end position="309"/>
    </location>
</feature>
<feature type="domain" description="Ig-like C2-type 4">
    <location>
        <begin position="314"/>
        <end position="409"/>
    </location>
</feature>
<feature type="domain" description="Ig-like C2-type 5">
    <location>
        <begin position="418"/>
        <end position="504"/>
    </location>
</feature>
<feature type="domain" description="Fibronectin type-III 1" evidence="4">
    <location>
        <begin position="524"/>
        <end position="618"/>
    </location>
</feature>
<feature type="domain" description="Fibronectin type-III 2" evidence="4">
    <location>
        <begin position="637"/>
        <end position="735"/>
    </location>
</feature>
<feature type="domain" description="Fibronectin type-III 3" evidence="4">
    <location>
        <begin position="739"/>
        <end position="836"/>
    </location>
</feature>
<feature type="region of interest" description="Disordered" evidence="5">
    <location>
        <begin position="603"/>
        <end position="625"/>
    </location>
</feature>
<feature type="region of interest" description="Disordered" evidence="5">
    <location>
        <begin position="1032"/>
        <end position="1084"/>
    </location>
</feature>
<feature type="region of interest" description="Disordered" evidence="5">
    <location>
        <begin position="1124"/>
        <end position="1156"/>
    </location>
</feature>
<feature type="region of interest" description="Disordered" evidence="5">
    <location>
        <begin position="1215"/>
        <end position="1348"/>
    </location>
</feature>
<feature type="compositionally biased region" description="Low complexity" evidence="5">
    <location>
        <begin position="1058"/>
        <end position="1067"/>
    </location>
</feature>
<feature type="compositionally biased region" description="Polar residues" evidence="5">
    <location>
        <begin position="1141"/>
        <end position="1155"/>
    </location>
</feature>
<feature type="compositionally biased region" description="Acidic residues" evidence="5">
    <location>
        <begin position="1215"/>
        <end position="1228"/>
    </location>
</feature>
<feature type="compositionally biased region" description="Polar residues" evidence="5">
    <location>
        <begin position="1240"/>
        <end position="1285"/>
    </location>
</feature>
<feature type="compositionally biased region" description="Low complexity" evidence="5">
    <location>
        <begin position="1319"/>
        <end position="1343"/>
    </location>
</feature>
<feature type="modified residue" description="Phosphothreonine" evidence="1">
    <location>
        <position position="1154"/>
    </location>
</feature>
<feature type="modified residue" description="Phosphoserine" evidence="1">
    <location>
        <position position="1156"/>
    </location>
</feature>
<feature type="glycosylation site" description="N-linked (GlcNAc...) asparagine" evidence="2">
    <location>
        <position position="123"/>
    </location>
</feature>
<feature type="glycosylation site" description="N-linked (GlcNAc...) asparagine" evidence="2">
    <location>
        <position position="426"/>
    </location>
</feature>
<feature type="glycosylation site" description="N-linked (GlcNAc...) asparagine" evidence="2">
    <location>
        <position position="752"/>
    </location>
</feature>
<feature type="glycosylation site" description="N-linked (GlcNAc...) asparagine" evidence="2">
    <location>
        <position position="782"/>
    </location>
</feature>
<feature type="glycosylation site" description="N-linked (GlcNAc...) asparagine" evidence="2">
    <location>
        <position position="789"/>
    </location>
</feature>
<feature type="glycosylation site" description="N-linked (GlcNAc...) asparagine" evidence="2">
    <location>
        <position position="845"/>
    </location>
</feature>
<feature type="disulfide bond" evidence="3">
    <location>
        <begin position="52"/>
        <end position="110"/>
    </location>
</feature>
<feature type="disulfide bond" evidence="3">
    <location>
        <begin position="154"/>
        <end position="203"/>
    </location>
</feature>
<feature type="disulfide bond" evidence="3">
    <location>
        <begin position="246"/>
        <end position="293"/>
    </location>
</feature>
<feature type="disulfide bond" evidence="3">
    <location>
        <begin position="335"/>
        <end position="391"/>
    </location>
</feature>
<feature type="disulfide bond" evidence="3">
    <location>
        <begin position="439"/>
        <end position="488"/>
    </location>
</feature>
<feature type="splice variant" id="VSP_043394" description="In isoform 3." evidence="10">
    <original>MSLLMFTQLLLCGFLYVRVD</original>
    <variation>MARRHERVTRRMWTWAPGLLMMTVVFWGHQGNGQGQ</variation>
    <location>
        <begin position="1"/>
        <end position="20"/>
    </location>
</feature>
<feature type="splice variant" id="VSP_010647" description="In isoform 2." evidence="9">
    <location>
        <begin position="1186"/>
        <end position="1378"/>
    </location>
</feature>
<feature type="sequence variant" id="VAR_032960" description="In VUR2; dbSNP:rs267607014." evidence="8">
    <original>I</original>
    <variation>T</variation>
    <location>
        <position position="945"/>
    </location>
</feature>
<feature type="sequence variant" id="VAR_032961" description="In VUR2; dbSNP:rs267607015." evidence="8">
    <original>A</original>
    <variation>T</variation>
    <location>
        <position position="1236"/>
    </location>
</feature>
<feature type="sequence conflict" description="In Ref. 5." evidence="11" ref="5">
    <original>T</original>
    <variation>A</variation>
    <location>
        <position position="497"/>
    </location>
</feature>
<feature type="strand" evidence="15">
    <location>
        <begin position="142"/>
        <end position="145"/>
    </location>
</feature>
<feature type="strand" evidence="15">
    <location>
        <begin position="150"/>
        <end position="153"/>
    </location>
</feature>
<feature type="strand" evidence="15">
    <location>
        <begin position="159"/>
        <end position="161"/>
    </location>
</feature>
<feature type="strand" evidence="15">
    <location>
        <begin position="164"/>
        <end position="169"/>
    </location>
</feature>
<feature type="strand" evidence="15">
    <location>
        <begin position="181"/>
        <end position="184"/>
    </location>
</feature>
<feature type="strand" evidence="15">
    <location>
        <begin position="187"/>
        <end position="190"/>
    </location>
</feature>
<feature type="helix" evidence="15">
    <location>
        <begin position="195"/>
        <end position="197"/>
    </location>
</feature>
<feature type="strand" evidence="15">
    <location>
        <begin position="199"/>
        <end position="207"/>
    </location>
</feature>
<feature type="strand" evidence="15">
    <location>
        <begin position="210"/>
        <end position="213"/>
    </location>
</feature>
<feature type="strand" evidence="15">
    <location>
        <begin position="217"/>
        <end position="229"/>
    </location>
</feature>
<feature type="strand" evidence="15">
    <location>
        <begin position="234"/>
        <end position="240"/>
    </location>
</feature>
<feature type="strand" evidence="15">
    <location>
        <begin position="242"/>
        <end position="244"/>
    </location>
</feature>
<feature type="strand" evidence="15">
    <location>
        <begin position="247"/>
        <end position="252"/>
    </location>
</feature>
<feature type="strand" evidence="15">
    <location>
        <begin position="255"/>
        <end position="260"/>
    </location>
</feature>
<feature type="turn" evidence="15">
    <location>
        <begin position="267"/>
        <end position="269"/>
    </location>
</feature>
<feature type="strand" evidence="15">
    <location>
        <begin position="274"/>
        <end position="276"/>
    </location>
</feature>
<feature type="strand" evidence="15">
    <location>
        <begin position="278"/>
        <end position="282"/>
    </location>
</feature>
<feature type="helix" evidence="15">
    <location>
        <begin position="285"/>
        <end position="287"/>
    </location>
</feature>
<feature type="strand" evidence="15">
    <location>
        <begin position="289"/>
        <end position="297"/>
    </location>
</feature>
<feature type="strand" evidence="15">
    <location>
        <begin position="300"/>
        <end position="311"/>
    </location>
</feature>
<feature type="strand" evidence="14">
    <location>
        <begin position="312"/>
        <end position="318"/>
    </location>
</feature>
<feature type="strand" evidence="14">
    <location>
        <begin position="323"/>
        <end position="326"/>
    </location>
</feature>
<feature type="strand" evidence="14">
    <location>
        <begin position="331"/>
        <end position="333"/>
    </location>
</feature>
<feature type="strand" evidence="14">
    <location>
        <begin position="336"/>
        <end position="341"/>
    </location>
</feature>
<feature type="strand" evidence="14">
    <location>
        <begin position="345"/>
        <end position="349"/>
    </location>
</feature>
<feature type="strand" evidence="14">
    <location>
        <begin position="367"/>
        <end position="370"/>
    </location>
</feature>
<feature type="strand" evidence="14">
    <location>
        <begin position="376"/>
        <end position="378"/>
    </location>
</feature>
<feature type="helix" evidence="14">
    <location>
        <begin position="383"/>
        <end position="385"/>
    </location>
</feature>
<feature type="strand" evidence="14">
    <location>
        <begin position="387"/>
        <end position="394"/>
    </location>
</feature>
<feature type="strand" evidence="14">
    <location>
        <begin position="399"/>
        <end position="409"/>
    </location>
</feature>
<feature type="strand" evidence="14">
    <location>
        <begin position="419"/>
        <end position="422"/>
    </location>
</feature>
<feature type="strand" evidence="14">
    <location>
        <begin position="427"/>
        <end position="430"/>
    </location>
</feature>
<feature type="strand" evidence="14">
    <location>
        <begin position="434"/>
        <end position="437"/>
    </location>
</feature>
<feature type="strand" evidence="14">
    <location>
        <begin position="440"/>
        <end position="442"/>
    </location>
</feature>
<feature type="strand" evidence="14">
    <location>
        <begin position="448"/>
        <end position="453"/>
    </location>
</feature>
<feature type="strand" evidence="14">
    <location>
        <begin position="456"/>
        <end position="458"/>
    </location>
</feature>
<feature type="strand" evidence="14">
    <location>
        <begin position="464"/>
        <end position="467"/>
    </location>
</feature>
<feature type="strand" evidence="14">
    <location>
        <begin position="469"/>
        <end position="471"/>
    </location>
</feature>
<feature type="strand" evidence="14">
    <location>
        <begin position="473"/>
        <end position="477"/>
    </location>
</feature>
<feature type="helix" evidence="14">
    <location>
        <begin position="480"/>
        <end position="482"/>
    </location>
</feature>
<feature type="strand" evidence="14">
    <location>
        <begin position="484"/>
        <end position="492"/>
    </location>
</feature>
<feature type="strand" evidence="14">
    <location>
        <begin position="495"/>
        <end position="508"/>
    </location>
</feature>
<feature type="strand" evidence="12">
    <location>
        <begin position="529"/>
        <end position="533"/>
    </location>
</feature>
<feature type="strand" evidence="12">
    <location>
        <begin position="538"/>
        <end position="541"/>
    </location>
</feature>
<feature type="strand" evidence="12">
    <location>
        <begin position="548"/>
        <end position="550"/>
    </location>
</feature>
<feature type="strand" evidence="12">
    <location>
        <begin position="554"/>
        <end position="561"/>
    </location>
</feature>
<feature type="turn" evidence="12">
    <location>
        <begin position="562"/>
        <end position="564"/>
    </location>
</feature>
<feature type="strand" evidence="12">
    <location>
        <begin position="565"/>
        <end position="575"/>
    </location>
</feature>
<feature type="strand" evidence="12">
    <location>
        <begin position="577"/>
        <end position="582"/>
    </location>
</feature>
<feature type="strand" evidence="12">
    <location>
        <begin position="590"/>
        <end position="599"/>
    </location>
</feature>
<feature type="strand" evidence="12">
    <location>
        <begin position="602"/>
        <end position="606"/>
    </location>
</feature>
<feature type="helix" evidence="13">
    <location>
        <begin position="630"/>
        <end position="636"/>
    </location>
</feature>
<feature type="strand" evidence="13">
    <location>
        <begin position="639"/>
        <end position="641"/>
    </location>
</feature>
<feature type="strand" evidence="13">
    <location>
        <begin position="651"/>
        <end position="660"/>
    </location>
</feature>
<feature type="strand" evidence="13">
    <location>
        <begin position="667"/>
        <end position="679"/>
    </location>
</feature>
<feature type="turn" evidence="13">
    <location>
        <begin position="680"/>
        <end position="682"/>
    </location>
</feature>
<feature type="strand" evidence="13">
    <location>
        <begin position="685"/>
        <end position="688"/>
    </location>
</feature>
<feature type="strand" evidence="13">
    <location>
        <begin position="696"/>
        <end position="701"/>
    </location>
</feature>
<feature type="strand" evidence="13">
    <location>
        <begin position="704"/>
        <end position="718"/>
    </location>
</feature>
<feature type="strand" evidence="13">
    <location>
        <begin position="727"/>
        <end position="731"/>
    </location>
</feature>
<name>ROBO2_HUMAN</name>
<reference key="1">
    <citation type="journal article" date="2006" name="Genomics">
        <title>Isolation and differential expression of two isoforms of the ROBO2/Robo2 axon guidance receptor gene in humans and mice.</title>
        <authorList>
            <person name="Yue Y."/>
            <person name="Grossmann B."/>
            <person name="Galetzka D."/>
            <person name="Zechner U."/>
            <person name="Haaf T."/>
        </authorList>
    </citation>
    <scope>NUCLEOTIDE SEQUENCE [MRNA] (ISOFORM 1)</scope>
    <scope>ALTERNATIVE SPLICING</scope>
</reference>
<reference key="2">
    <citation type="journal article" date="2000" name="DNA Res.">
        <title>Prediction of the coding sequences of unidentified human genes. XVIII. The complete sequences of 100 new cDNA clones from brain which code for large proteins in vitro.</title>
        <authorList>
            <person name="Nagase T."/>
            <person name="Kikuno R."/>
            <person name="Nakayama M."/>
            <person name="Hirosawa M."/>
            <person name="Ohara O."/>
        </authorList>
    </citation>
    <scope>NUCLEOTIDE SEQUENCE [LARGE SCALE MRNA] (ISOFORM 1)</scope>
    <source>
        <tissue>Brain</tissue>
    </source>
</reference>
<reference key="3">
    <citation type="submission" date="2006-05" db="EMBL/GenBank/DDBJ databases">
        <authorList>
            <person name="Yue Y."/>
            <person name="Grossmann B."/>
            <person name="Galetzka D."/>
            <person name="Zechner U."/>
            <person name="Haaf T."/>
        </authorList>
    </citation>
    <scope>NUCLEOTIDE SEQUENCE [MRNA] (ISOFORM 3)</scope>
</reference>
<reference key="4">
    <citation type="journal article" date="2006" name="Nature">
        <title>The DNA sequence, annotation and analysis of human chromosome 3.</title>
        <authorList>
            <person name="Muzny D.M."/>
            <person name="Scherer S.E."/>
            <person name="Kaul R."/>
            <person name="Wang J."/>
            <person name="Yu J."/>
            <person name="Sudbrak R."/>
            <person name="Buhay C.J."/>
            <person name="Chen R."/>
            <person name="Cree A."/>
            <person name="Ding Y."/>
            <person name="Dugan-Rocha S."/>
            <person name="Gill R."/>
            <person name="Gunaratne P."/>
            <person name="Harris R.A."/>
            <person name="Hawes A.C."/>
            <person name="Hernandez J."/>
            <person name="Hodgson A.V."/>
            <person name="Hume J."/>
            <person name="Jackson A."/>
            <person name="Khan Z.M."/>
            <person name="Kovar-Smith C."/>
            <person name="Lewis L.R."/>
            <person name="Lozado R.J."/>
            <person name="Metzker M.L."/>
            <person name="Milosavljevic A."/>
            <person name="Miner G.R."/>
            <person name="Morgan M.B."/>
            <person name="Nazareth L.V."/>
            <person name="Scott G."/>
            <person name="Sodergren E."/>
            <person name="Song X.-Z."/>
            <person name="Steffen D."/>
            <person name="Wei S."/>
            <person name="Wheeler D.A."/>
            <person name="Wright M.W."/>
            <person name="Worley K.C."/>
            <person name="Yuan Y."/>
            <person name="Zhang Z."/>
            <person name="Adams C.Q."/>
            <person name="Ansari-Lari M.A."/>
            <person name="Ayele M."/>
            <person name="Brown M.J."/>
            <person name="Chen G."/>
            <person name="Chen Z."/>
            <person name="Clendenning J."/>
            <person name="Clerc-Blankenburg K.P."/>
            <person name="Chen R."/>
            <person name="Chen Z."/>
            <person name="Davis C."/>
            <person name="Delgado O."/>
            <person name="Dinh H.H."/>
            <person name="Dong W."/>
            <person name="Draper H."/>
            <person name="Ernst S."/>
            <person name="Fu G."/>
            <person name="Gonzalez-Garay M.L."/>
            <person name="Garcia D.K."/>
            <person name="Gillett W."/>
            <person name="Gu J."/>
            <person name="Hao B."/>
            <person name="Haugen E."/>
            <person name="Havlak P."/>
            <person name="He X."/>
            <person name="Hennig S."/>
            <person name="Hu S."/>
            <person name="Huang W."/>
            <person name="Jackson L.R."/>
            <person name="Jacob L.S."/>
            <person name="Kelly S.H."/>
            <person name="Kube M."/>
            <person name="Levy R."/>
            <person name="Li Z."/>
            <person name="Liu B."/>
            <person name="Liu J."/>
            <person name="Liu W."/>
            <person name="Lu J."/>
            <person name="Maheshwari M."/>
            <person name="Nguyen B.-V."/>
            <person name="Okwuonu G.O."/>
            <person name="Palmeiri A."/>
            <person name="Pasternak S."/>
            <person name="Perez L.M."/>
            <person name="Phelps K.A."/>
            <person name="Plopper F.J."/>
            <person name="Qiang B."/>
            <person name="Raymond C."/>
            <person name="Rodriguez R."/>
            <person name="Saenphimmachak C."/>
            <person name="Santibanez J."/>
            <person name="Shen H."/>
            <person name="Shen Y."/>
            <person name="Subramanian S."/>
            <person name="Tabor P.E."/>
            <person name="Verduzco D."/>
            <person name="Waldron L."/>
            <person name="Wang J."/>
            <person name="Wang J."/>
            <person name="Wang Q."/>
            <person name="Williams G.A."/>
            <person name="Wong G.K.-S."/>
            <person name="Yao Z."/>
            <person name="Zhang J."/>
            <person name="Zhang X."/>
            <person name="Zhao G."/>
            <person name="Zhou J."/>
            <person name="Zhou Y."/>
            <person name="Nelson D."/>
            <person name="Lehrach H."/>
            <person name="Reinhardt R."/>
            <person name="Naylor S.L."/>
            <person name="Yang H."/>
            <person name="Olson M."/>
            <person name="Weinstock G."/>
            <person name="Gibbs R.A."/>
        </authorList>
    </citation>
    <scope>NUCLEOTIDE SEQUENCE [LARGE SCALE GENOMIC DNA]</scope>
</reference>
<reference key="5">
    <citation type="journal article" date="2004" name="Genome Res.">
        <title>The status, quality, and expansion of the NIH full-length cDNA project: the Mammalian Gene Collection (MGC).</title>
        <authorList>
            <consortium name="The MGC Project Team"/>
        </authorList>
    </citation>
    <scope>NUCLEOTIDE SEQUENCE [LARGE SCALE MRNA] (ISOFORM 1)</scope>
    <scope>NUCLEOTIDE SEQUENCE [LARGE SCALE MRNA] OF 845-1378 (ISOFORM 2)</scope>
    <source>
        <tissue>Ovary</tissue>
    </source>
</reference>
<reference key="6">
    <citation type="journal article" date="1998" name="Cell">
        <title>Roundabout controls axon crossing of the CNS midline and defines a novel subfamily of evolutionarily conserved guidance receptors.</title>
        <authorList>
            <person name="Kidd T."/>
            <person name="Brose K."/>
            <person name="Mitchell K.J."/>
            <person name="Fetter R.D."/>
            <person name="Tessier-Lavigne M."/>
            <person name="Goodman C.S."/>
            <person name="Tear G."/>
        </authorList>
    </citation>
    <scope>NUCLEOTIDE SEQUENCE [MRNA] OF 323-607</scope>
</reference>
<reference key="7">
    <citation type="journal article" date="1999" name="Cell">
        <title>Slit proteins bind Robo receptors and have an evolutionarily conserved role in repulsive axon guidance.</title>
        <authorList>
            <person name="Brose K."/>
            <person name="Bland K.S."/>
            <person name="Wang K.H."/>
            <person name="Arnott D."/>
            <person name="Henzel W."/>
            <person name="Goodman C.S."/>
            <person name="Tessier-Lavigne M."/>
            <person name="Kidd T."/>
        </authorList>
    </citation>
    <scope>INTERACTION WITH SLIT2</scope>
</reference>
<reference key="8">
    <citation type="journal article" date="2001" name="J. Neurosci.">
        <title>Diversity and specificity of actions of Slit2 proteolytic fragments in axon guidance.</title>
        <authorList>
            <person name="Nguyen-Ba-Charvet K.T."/>
            <person name="Brose K."/>
            <person name="Ma L."/>
            <person name="Wang K.H."/>
            <person name="Marillat V."/>
            <person name="Sotelo C."/>
            <person name="Tessier-Lavigne M."/>
            <person name="Chedotal A."/>
        </authorList>
    </citation>
    <scope>INTERACTION WITH SLIT2</scope>
</reference>
<reference key="9">
    <citation type="submission" date="2007-08" db="PDB data bank">
        <title>Solution structure of the fifth Ig-like domain and of first and second fibronectin type III domain from human roundabout homolog 2.</title>
        <authorList>
            <consortium name="RIKEN structural genomics initiative (RSGI)"/>
        </authorList>
    </citation>
    <scope>STRUCTURE BY NMR OF 417-734</scope>
</reference>
<reference key="10">
    <citation type="journal article" date="2007" name="Am. J. Hum. Genet.">
        <title>Disruption of ROBO2 is associated with urinary tract anomalies and confers risk of vesicoureteral reflux.</title>
        <authorList>
            <person name="Lu W."/>
            <person name="van Eerde A.M."/>
            <person name="Fan X."/>
            <person name="Quintero-Rivera F."/>
            <person name="Kulkarni S."/>
            <person name="Ferguson H."/>
            <person name="Kim H.-G."/>
            <person name="Fan Y."/>
            <person name="Xi Q."/>
            <person name="Li Q.-G."/>
            <person name="Sanlaville D."/>
            <person name="Andrews W."/>
            <person name="Sundaresan V."/>
            <person name="Bi W."/>
            <person name="Yan J."/>
            <person name="Giltay J.C."/>
            <person name="Wijmenga C."/>
            <person name="de Jong T.P.V.M."/>
            <person name="Feather S.A."/>
            <person name="Woolf A.S."/>
            <person name="Rao Y."/>
            <person name="Lupski J.R."/>
            <person name="Eccles M.R."/>
            <person name="Quade B.J."/>
            <person name="Gusella J.F."/>
            <person name="Morton C.C."/>
            <person name="Maas R.L."/>
        </authorList>
    </citation>
    <scope>VARIANTS VUR2 THR-945 AND THR-1236</scope>
    <scope>CHROMOSOMAL TRANSLOCATION WITH PCDH11Y</scope>
</reference>
<evidence type="ECO:0000250" key="1">
    <source>
        <dbReference type="UniProtKB" id="Q7TPD3"/>
    </source>
</evidence>
<evidence type="ECO:0000255" key="2"/>
<evidence type="ECO:0000255" key="3">
    <source>
        <dbReference type="PROSITE-ProRule" id="PRU00114"/>
    </source>
</evidence>
<evidence type="ECO:0000255" key="4">
    <source>
        <dbReference type="PROSITE-ProRule" id="PRU00316"/>
    </source>
</evidence>
<evidence type="ECO:0000256" key="5">
    <source>
        <dbReference type="SAM" id="MobiDB-lite"/>
    </source>
</evidence>
<evidence type="ECO:0000269" key="6">
    <source>
    </source>
</evidence>
<evidence type="ECO:0000269" key="7">
    <source>
    </source>
</evidence>
<evidence type="ECO:0000269" key="8">
    <source>
    </source>
</evidence>
<evidence type="ECO:0000303" key="9">
    <source>
    </source>
</evidence>
<evidence type="ECO:0000303" key="10">
    <source ref="3"/>
</evidence>
<evidence type="ECO:0000305" key="11"/>
<evidence type="ECO:0007829" key="12">
    <source>
        <dbReference type="PDB" id="1UEM"/>
    </source>
</evidence>
<evidence type="ECO:0007829" key="13">
    <source>
        <dbReference type="PDB" id="1UJT"/>
    </source>
</evidence>
<evidence type="ECO:0007829" key="14">
    <source>
        <dbReference type="PDB" id="5NOI"/>
    </source>
</evidence>
<evidence type="ECO:0007829" key="15">
    <source>
        <dbReference type="PDB" id="6I9S"/>
    </source>
</evidence>
<keyword id="KW-0002">3D-structure</keyword>
<keyword id="KW-0025">Alternative splicing</keyword>
<keyword id="KW-0145">Chemotaxis</keyword>
<keyword id="KW-0160">Chromosomal rearrangement</keyword>
<keyword id="KW-0217">Developmental protein</keyword>
<keyword id="KW-0221">Differentiation</keyword>
<keyword id="KW-0225">Disease variant</keyword>
<keyword id="KW-1015">Disulfide bond</keyword>
<keyword id="KW-0325">Glycoprotein</keyword>
<keyword id="KW-0393">Immunoglobulin domain</keyword>
<keyword id="KW-0472">Membrane</keyword>
<keyword id="KW-0524">Neurogenesis</keyword>
<keyword id="KW-0597">Phosphoprotein</keyword>
<keyword id="KW-1267">Proteomics identification</keyword>
<keyword id="KW-0675">Receptor</keyword>
<keyword id="KW-1185">Reference proteome</keyword>
<keyword id="KW-0677">Repeat</keyword>
<keyword id="KW-0732">Signal</keyword>
<keyword id="KW-0812">Transmembrane</keyword>
<keyword id="KW-1133">Transmembrane helix</keyword>